<gene>
    <name type="ORF">B0361.3</name>
</gene>
<name>YMP3_CAEEL</name>
<feature type="chain" id="PRO_0000065075" description="Uncharacterized protein B0361.3">
    <location>
        <begin position="1"/>
        <end position="627"/>
    </location>
</feature>
<protein>
    <recommendedName>
        <fullName>Uncharacterized protein B0361.3</fullName>
    </recommendedName>
</protein>
<keyword id="KW-1185">Reference proteome</keyword>
<reference key="1">
    <citation type="journal article" date="1998" name="Science">
        <title>Genome sequence of the nematode C. elegans: a platform for investigating biology.</title>
        <authorList>
            <consortium name="The C. elegans sequencing consortium"/>
        </authorList>
    </citation>
    <scope>NUCLEOTIDE SEQUENCE [LARGE SCALE GENOMIC DNA]</scope>
    <source>
        <strain>Bristol N2</strain>
    </source>
</reference>
<proteinExistence type="predicted"/>
<dbReference type="EMBL" id="FO080185">
    <property type="protein sequence ID" value="CCD61818.1"/>
    <property type="molecule type" value="Genomic_DNA"/>
</dbReference>
<dbReference type="RefSeq" id="NP_498603.2">
    <property type="nucleotide sequence ID" value="NM_066202.8"/>
</dbReference>
<dbReference type="BioGRID" id="41240">
    <property type="interactions" value="3"/>
</dbReference>
<dbReference type="FunCoup" id="Q7JPQ6">
    <property type="interactions" value="458"/>
</dbReference>
<dbReference type="iPTMnet" id="Q7JPQ6"/>
<dbReference type="PaxDb" id="6239-B0361.3.2"/>
<dbReference type="PeptideAtlas" id="Q7JPQ6"/>
<dbReference type="EnsemblMetazoa" id="B0361.3.1">
    <property type="protein sequence ID" value="B0361.3.1"/>
    <property type="gene ID" value="WBGene00015157"/>
</dbReference>
<dbReference type="GeneID" id="176029"/>
<dbReference type="KEGG" id="cel:CELE_B0361.3"/>
<dbReference type="UCSC" id="B0361.3.1">
    <property type="organism name" value="c. elegans"/>
</dbReference>
<dbReference type="AGR" id="WB:WBGene00015157"/>
<dbReference type="CTD" id="176029"/>
<dbReference type="WormBase" id="B0361.3">
    <property type="protein sequence ID" value="CE34242"/>
    <property type="gene ID" value="WBGene00015157"/>
</dbReference>
<dbReference type="eggNOG" id="KOG0255">
    <property type="taxonomic scope" value="Eukaryota"/>
</dbReference>
<dbReference type="HOGENOM" id="CLU_512140_0_0_1"/>
<dbReference type="InParanoid" id="Q7JPQ6"/>
<dbReference type="OMA" id="VFLSWYS"/>
<dbReference type="OrthoDB" id="5780193at2759"/>
<dbReference type="PRO" id="PR:Q7JPQ6"/>
<dbReference type="Proteomes" id="UP000001940">
    <property type="component" value="Chromosome III"/>
</dbReference>
<dbReference type="Bgee" id="WBGene00015157">
    <property type="expression patterns" value="Expressed in germ line (C elegans) and 4 other cell types or tissues"/>
</dbReference>
<organism>
    <name type="scientific">Caenorhabditis elegans</name>
    <dbReference type="NCBI Taxonomy" id="6239"/>
    <lineage>
        <taxon>Eukaryota</taxon>
        <taxon>Metazoa</taxon>
        <taxon>Ecdysozoa</taxon>
        <taxon>Nematoda</taxon>
        <taxon>Chromadorea</taxon>
        <taxon>Rhabditida</taxon>
        <taxon>Rhabditina</taxon>
        <taxon>Rhabditomorpha</taxon>
        <taxon>Rhabditoidea</taxon>
        <taxon>Rhabditidae</taxon>
        <taxon>Peloderinae</taxon>
        <taxon>Caenorhabditis</taxon>
    </lineage>
</organism>
<accession>Q7JPQ6</accession>
<accession>Q10947</accession>
<sequence>MTIHHHGSAERKSIDDYSDIPRGEACKQLVEQLNRNLYSLNSNMQTTFKQMVHVETRIGHEISLLSSCLQENMSKCTMPYAPHEEQLVQLDSAKRNLKQLTRLLDARQIFDAEDSQSEKLKDRAIDDSLLPTLVAIGDNLKIIKELGAKPKFDAETYHKTKDRYLAWKGTEFAVKFDTPGGLDDIFDAFTTLNSVNDFYRLYQHHFDQSLNNLNKNSGIEDEKSLKEMGTVFVTKAAEHFRTHIGSLCKYCDENEAFTRLLDAWKNYIKNGTLEKLFEQSMENYNNYDLLSDLKSVVTKAYEEFETNTAGGPEDDEESIENIERIIVDGLMESAKKPLSEKLRSMVEPPPLNFRSVAEVMSSLENFAYLLREISHQLLEIYLEDEGREFMISILKPIFTDYTMRLCRMEDNSTPKVKLEEYLERIALAGQLSTIVEEYKDQTEIKNGLELKNAKKWMNERVKDAIRASHRFVTDKMPNHGSETYKESADMAKSALPTPQDFVVTATQNLLHLLRFWEEALANENTKVALIAHVMDINKESLETPDDDAIFAAILDRIASHVVKKLLQSINDVWLTDGKTATLSKGLVKEFLCDAEYLRDALVDLRAGTHDNLDSTINKLREQLKTMS</sequence>